<protein>
    <recommendedName>
        <fullName evidence="1">Flagellar brake protein YcgR</fullName>
    </recommendedName>
    <alternativeName>
        <fullName evidence="1">Cyclic di-GMP binding protein YcgR</fullName>
    </alternativeName>
</protein>
<proteinExistence type="inferred from homology"/>
<feature type="chain" id="PRO_0000395269" description="Flagellar brake protein YcgR">
    <location>
        <begin position="1"/>
        <end position="246"/>
    </location>
</feature>
<feature type="domain" description="PilZ" evidence="1">
    <location>
        <begin position="122"/>
        <end position="234"/>
    </location>
</feature>
<organism>
    <name type="scientific">Chromobacterium violaceum (strain ATCC 12472 / DSM 30191 / JCM 1249 / CCUG 213 / NBRC 12614 / NCIMB 9131 / NCTC 9757 / MK)</name>
    <dbReference type="NCBI Taxonomy" id="243365"/>
    <lineage>
        <taxon>Bacteria</taxon>
        <taxon>Pseudomonadati</taxon>
        <taxon>Pseudomonadota</taxon>
        <taxon>Betaproteobacteria</taxon>
        <taxon>Neisseriales</taxon>
        <taxon>Chromobacteriaceae</taxon>
        <taxon>Chromobacterium</taxon>
    </lineage>
</organism>
<keyword id="KW-0975">Bacterial flagellum</keyword>
<keyword id="KW-0973">c-di-GMP</keyword>
<keyword id="KW-0547">Nucleotide-binding</keyword>
<keyword id="KW-1185">Reference proteome</keyword>
<reference key="1">
    <citation type="journal article" date="2003" name="Proc. Natl. Acad. Sci. U.S.A.">
        <title>The complete genome sequence of Chromobacterium violaceum reveals remarkable and exploitable bacterial adaptability.</title>
        <authorList>
            <person name="Vasconcelos A.T.R."/>
            <person name="de Almeida D.F."/>
            <person name="Hungria M."/>
            <person name="Guimaraes C.T."/>
            <person name="Antonio R.V."/>
            <person name="Almeida F.C."/>
            <person name="de Almeida L.G.P."/>
            <person name="de Almeida R."/>
            <person name="Alves-Gomes J.A."/>
            <person name="Andrade E.M."/>
            <person name="Araripe J."/>
            <person name="de Araujo M.F.F."/>
            <person name="Astolfi-Filho S."/>
            <person name="Azevedo V."/>
            <person name="Baptista A.J."/>
            <person name="Bataus L.A.M."/>
            <person name="Batista J.S."/>
            <person name="Belo A."/>
            <person name="van den Berg C."/>
            <person name="Bogo M."/>
            <person name="Bonatto S."/>
            <person name="Bordignon J."/>
            <person name="Brigido M.M."/>
            <person name="Brito C.A."/>
            <person name="Brocchi M."/>
            <person name="Burity H.A."/>
            <person name="Camargo A.A."/>
            <person name="Cardoso D.D.P."/>
            <person name="Carneiro N.P."/>
            <person name="Carraro D.M."/>
            <person name="Carvalho C.M.B."/>
            <person name="Cascardo J.C.M."/>
            <person name="Cavada B.S."/>
            <person name="Chueire L.M.O."/>
            <person name="Creczynski-Pasa T.B."/>
            <person name="Cunha-Junior N.C."/>
            <person name="Fagundes N."/>
            <person name="Falcao C.L."/>
            <person name="Fantinatti F."/>
            <person name="Farias I.P."/>
            <person name="Felipe M.S.S."/>
            <person name="Ferrari L.P."/>
            <person name="Ferro J.A."/>
            <person name="Ferro M.I.T."/>
            <person name="Franco G.R."/>
            <person name="Freitas N.S.A."/>
            <person name="Furlan L.R."/>
            <person name="Gazzinelli R.T."/>
            <person name="Gomes E.A."/>
            <person name="Goncalves P.R."/>
            <person name="Grangeiro T.B."/>
            <person name="Grattapaglia D."/>
            <person name="Grisard E.C."/>
            <person name="Hanna E.S."/>
            <person name="Jardim S.N."/>
            <person name="Laurino J."/>
            <person name="Leoi L.C.T."/>
            <person name="Lima L.F.A."/>
            <person name="Loureiro M.F."/>
            <person name="Lyra M.C.C.P."/>
            <person name="Madeira H.M.F."/>
            <person name="Manfio G.P."/>
            <person name="Maranhao A.Q."/>
            <person name="Martins W.S."/>
            <person name="di Mauro S.M.Z."/>
            <person name="de Medeiros S.R.B."/>
            <person name="Meissner R.V."/>
            <person name="Moreira M.A.M."/>
            <person name="Nascimento F.F."/>
            <person name="Nicolas M.F."/>
            <person name="Oliveira J.G."/>
            <person name="Oliveira S.C."/>
            <person name="Paixao R.F.C."/>
            <person name="Parente J.A."/>
            <person name="Pedrosa F.O."/>
            <person name="Pena S.D.J."/>
            <person name="Pereira J.O."/>
            <person name="Pereira M."/>
            <person name="Pinto L.S.R.C."/>
            <person name="Pinto L.S."/>
            <person name="Porto J.I.R."/>
            <person name="Potrich D.P."/>
            <person name="Ramalho-Neto C.E."/>
            <person name="Reis A.M.M."/>
            <person name="Rigo L.U."/>
            <person name="Rondinelli E."/>
            <person name="Santos E.B.P."/>
            <person name="Santos F.R."/>
            <person name="Schneider M.P.C."/>
            <person name="Seuanez H.N."/>
            <person name="Silva A.M.R."/>
            <person name="da Silva A.L.C."/>
            <person name="Silva D.W."/>
            <person name="Silva R."/>
            <person name="Simoes I.C."/>
            <person name="Simon D."/>
            <person name="Soares C.M.A."/>
            <person name="Soares R.B.A."/>
            <person name="Souza E.M."/>
            <person name="Souza K.R.L."/>
            <person name="Souza R.C."/>
            <person name="Steffens M.B.R."/>
            <person name="Steindel M."/>
            <person name="Teixeira S.R."/>
            <person name="Urmenyi T."/>
            <person name="Vettore A."/>
            <person name="Wassem R."/>
            <person name="Zaha A."/>
            <person name="Simpson A.J.G."/>
        </authorList>
    </citation>
    <scope>NUCLEOTIDE SEQUENCE [LARGE SCALE GENOMIC DNA]</scope>
    <source>
        <strain>ATCC 12472 / DSM 30191 / JCM 1249 / CCUG 213 / NBRC 12614 / NCIMB 9131 / NCTC 9757 / MK</strain>
    </source>
</reference>
<sequence>MPASSHQPLDLAKFTLSSPTEIAQHLSNIAKHGHMVTVFANKGKNFILTRLLEVDYQAGVFTFDWGAEEETNTQVLNSERNVFVCSPEGVKTQFVAGQISQVMVDDRPAFQCRLPEQVIKLQRREFFRIQTPLGSPVFCRIGDFNQRSIDLALFDISLGGMSLWLPGIDTPGFDIGQQYLQCSIDLKPFGTLALGIEVRHRLTARMRNGNEAMRIGCSYLNLSAPMETIIQRYVGFLERERRAMVG</sequence>
<gene>
    <name evidence="1" type="primary">ycgR</name>
    <name type="ordered locus">CV_0609</name>
</gene>
<accession>Q7P0F8</accession>
<evidence type="ECO:0000255" key="1">
    <source>
        <dbReference type="HAMAP-Rule" id="MF_01457"/>
    </source>
</evidence>
<comment type="function">
    <text evidence="1">Acts as a flagellar brake, regulating swimming and swarming in a bis-(3'-5') cyclic diguanylic acid (c-di-GMP)-dependent manner. Binds 1 c-di-GMP dimer per subunit. Increasing levels of c-di-GMP lead to decreased motility.</text>
</comment>
<comment type="subunit">
    <text evidence="1">Monomer. Interacts with the flagellar basal bodies.</text>
</comment>
<comment type="subcellular location">
    <subcellularLocation>
        <location evidence="1">Bacterial flagellum basal body</location>
    </subcellularLocation>
</comment>
<comment type="similarity">
    <text evidence="1">Belongs to the YcgR family.</text>
</comment>
<dbReference type="EMBL" id="AE016825">
    <property type="protein sequence ID" value="AAQ58285.1"/>
    <property type="molecule type" value="Genomic_DNA"/>
</dbReference>
<dbReference type="SMR" id="Q7P0F8"/>
<dbReference type="STRING" id="243365.CV_0609"/>
<dbReference type="KEGG" id="cvi:CV_0609"/>
<dbReference type="eggNOG" id="COG5581">
    <property type="taxonomic scope" value="Bacteria"/>
</dbReference>
<dbReference type="HOGENOM" id="CLU_086025_0_0_4"/>
<dbReference type="OrthoDB" id="5572581at2"/>
<dbReference type="Proteomes" id="UP000001424">
    <property type="component" value="Chromosome"/>
</dbReference>
<dbReference type="GO" id="GO:0009425">
    <property type="term" value="C:bacterial-type flagellum basal body"/>
    <property type="evidence" value="ECO:0007669"/>
    <property type="project" value="UniProtKB-SubCell"/>
</dbReference>
<dbReference type="GO" id="GO:0035438">
    <property type="term" value="F:cyclic-di-GMP binding"/>
    <property type="evidence" value="ECO:0007669"/>
    <property type="project" value="UniProtKB-UniRule"/>
</dbReference>
<dbReference type="GO" id="GO:0071973">
    <property type="term" value="P:bacterial-type flagellum-dependent cell motility"/>
    <property type="evidence" value="ECO:0007669"/>
    <property type="project" value="UniProtKB-UniRule"/>
</dbReference>
<dbReference type="GO" id="GO:0071945">
    <property type="term" value="P:regulation of bacterial-type flagellum-dependent cell motility by regulation of motor speed"/>
    <property type="evidence" value="ECO:0007669"/>
    <property type="project" value="UniProtKB-UniRule"/>
</dbReference>
<dbReference type="Gene3D" id="2.30.110.10">
    <property type="entry name" value="Electron Transport, Fmn-binding Protein, Chain A"/>
    <property type="match status" value="1"/>
</dbReference>
<dbReference type="Gene3D" id="2.40.10.220">
    <property type="entry name" value="predicted glycosyltransferase like domains"/>
    <property type="match status" value="1"/>
</dbReference>
<dbReference type="HAMAP" id="MF_01457">
    <property type="entry name" value="YcgR"/>
    <property type="match status" value="1"/>
</dbReference>
<dbReference type="InterPro" id="IPR009875">
    <property type="entry name" value="PilZ_domain"/>
</dbReference>
<dbReference type="InterPro" id="IPR012349">
    <property type="entry name" value="Split_barrel_FMN-bd"/>
</dbReference>
<dbReference type="InterPro" id="IPR023787">
    <property type="entry name" value="T3SS_YcgR"/>
</dbReference>
<dbReference type="InterPro" id="IPR009926">
    <property type="entry name" value="T3SS_YcgR_PilZN"/>
</dbReference>
<dbReference type="Pfam" id="PF07238">
    <property type="entry name" value="PilZ"/>
    <property type="match status" value="1"/>
</dbReference>
<dbReference type="Pfam" id="PF07317">
    <property type="entry name" value="PilZN"/>
    <property type="match status" value="1"/>
</dbReference>
<name>YCGR_CHRVO</name>